<reference key="1">
    <citation type="submission" date="2003-01" db="EMBL/GenBank/DDBJ databases">
        <authorList>
            <consortium name="NIH - Xenopus Gene Collection (XGC) project"/>
        </authorList>
    </citation>
    <scope>NUCLEOTIDE SEQUENCE [LARGE SCALE MRNA]</scope>
    <source>
        <tissue>Embryo</tissue>
    </source>
</reference>
<comment type="function">
    <text evidence="1">Regulatory subunit of serine/threonine-protein phosphatase 4 (PP4).</text>
</comment>
<comment type="subunit">
    <text evidence="1">Serine/threonine-protein phosphatase 4 (PP4) occurs in different assemblies of the catalytic and one or more regulatory subunits.</text>
</comment>
<comment type="similarity">
    <text evidence="4">Belongs to the SMEK family.</text>
</comment>
<proteinExistence type="evidence at transcript level"/>
<gene>
    <name evidence="2" type="primary">ppp4r3b-a</name>
    <name type="synonym">smek2-a</name>
</gene>
<name>P4R3A_XENLA</name>
<keyword id="KW-1185">Reference proteome</keyword>
<accession>Q7ZX60</accession>
<protein>
    <recommendedName>
        <fullName evidence="2">Serine/threonine-protein phosphatase 4 regulatory subunit 3-A</fullName>
    </recommendedName>
    <alternativeName>
        <fullName>SMEK homolog 2-A</fullName>
    </alternativeName>
</protein>
<evidence type="ECO:0000250" key="1"/>
<evidence type="ECO:0000250" key="2">
    <source>
        <dbReference type="UniProtKB" id="Q5MIZ7"/>
    </source>
</evidence>
<evidence type="ECO:0000256" key="3">
    <source>
        <dbReference type="SAM" id="MobiDB-lite"/>
    </source>
</evidence>
<evidence type="ECO:0000305" key="4"/>
<dbReference type="EMBL" id="BC045225">
    <property type="protein sequence ID" value="AAH45225.1"/>
    <property type="molecule type" value="mRNA"/>
</dbReference>
<dbReference type="RefSeq" id="NP_001079620.1">
    <property type="nucleotide sequence ID" value="NM_001086151.1"/>
</dbReference>
<dbReference type="DNASU" id="379307"/>
<dbReference type="GeneID" id="379307"/>
<dbReference type="KEGG" id="xla:379307"/>
<dbReference type="AGR" id="Xenbase:XB-GENE-6256096"/>
<dbReference type="CTD" id="379307"/>
<dbReference type="Xenbase" id="XB-GENE-6256096">
    <property type="gene designation" value="ppp4r3b.L"/>
</dbReference>
<dbReference type="OrthoDB" id="27483at2759"/>
<dbReference type="Proteomes" id="UP000186698">
    <property type="component" value="Chromosome 5L"/>
</dbReference>
<dbReference type="Bgee" id="379307">
    <property type="expression patterns" value="Expressed in blastula and 19 other cell types or tissues"/>
</dbReference>
<dbReference type="GO" id="GO:0005654">
    <property type="term" value="C:nucleoplasm"/>
    <property type="evidence" value="ECO:0000318"/>
    <property type="project" value="GO_Central"/>
</dbReference>
<dbReference type="GO" id="GO:0030289">
    <property type="term" value="C:protein phosphatase 4 complex"/>
    <property type="evidence" value="ECO:0000318"/>
    <property type="project" value="GO_Central"/>
</dbReference>
<dbReference type="GO" id="GO:0072542">
    <property type="term" value="F:protein phosphatase activator activity"/>
    <property type="evidence" value="ECO:0000318"/>
    <property type="project" value="GO_Central"/>
</dbReference>
<dbReference type="GO" id="GO:0006974">
    <property type="term" value="P:DNA damage response"/>
    <property type="evidence" value="ECO:0000318"/>
    <property type="project" value="GO_Central"/>
</dbReference>
<dbReference type="GO" id="GO:2000779">
    <property type="term" value="P:regulation of double-strand break repair"/>
    <property type="evidence" value="ECO:0000318"/>
    <property type="project" value="GO_Central"/>
</dbReference>
<dbReference type="FunFam" id="2.30.29.30:FF:000051">
    <property type="entry name" value="Serine/threonine-protein phosphatase 4 regulatory subunit 3B"/>
    <property type="match status" value="1"/>
</dbReference>
<dbReference type="Gene3D" id="2.30.29.30">
    <property type="entry name" value="Pleckstrin-homology domain (PH domain)/Phosphotyrosine-binding domain (PTB)"/>
    <property type="match status" value="1"/>
</dbReference>
<dbReference type="InterPro" id="IPR016024">
    <property type="entry name" value="ARM-type_fold"/>
</dbReference>
<dbReference type="InterPro" id="IPR055236">
    <property type="entry name" value="EVH1_PP4R3"/>
</dbReference>
<dbReference type="InterPro" id="IPR006887">
    <property type="entry name" value="P4R3-like_central_dom"/>
</dbReference>
<dbReference type="InterPro" id="IPR011993">
    <property type="entry name" value="PH-like_dom_sf"/>
</dbReference>
<dbReference type="InterPro" id="IPR051137">
    <property type="entry name" value="PP4R3-like"/>
</dbReference>
<dbReference type="PANTHER" id="PTHR23318">
    <property type="entry name" value="ATP SYNTHASE GAMMA-RELATED"/>
    <property type="match status" value="1"/>
</dbReference>
<dbReference type="PANTHER" id="PTHR23318:SF18">
    <property type="entry name" value="SERINE_THREONINE-PROTEIN PHOSPHATASE 4 REGULATORY SUBUNIT 3B"/>
    <property type="match status" value="1"/>
</dbReference>
<dbReference type="Pfam" id="PF22972">
    <property type="entry name" value="EVH1_PP4R3"/>
    <property type="match status" value="1"/>
</dbReference>
<dbReference type="Pfam" id="PF04802">
    <property type="entry name" value="PP4R3"/>
    <property type="match status" value="1"/>
</dbReference>
<dbReference type="SUPFAM" id="SSF48371">
    <property type="entry name" value="ARM repeat"/>
    <property type="match status" value="1"/>
</dbReference>
<dbReference type="SUPFAM" id="SSF50729">
    <property type="entry name" value="PH domain-like"/>
    <property type="match status" value="1"/>
</dbReference>
<sequence length="820" mass="93726">MSDTRRRVKVYTLNEDRQWDDRGTGHVSSTYVERLKGMSLLVRAESDGSLLLESKINPNTAYQKQQDTLIVWSEAENYDLALSFQEKAGCDEIWEKICQVQGKDPSVEVTQDPIDESEEERFEEMPETSNLIDLPTCELGKLEEIADLVTSVLSSPIRREKLALALENEGYIKKLLQLFQTCENLDNTEGLHHLYEIIRGILFLNKAALFEVMFSDECIMDVVGCLEYDPALAQPKRHREFLTKTAKFKEVIPITDSELRQKIHQTYRVQYIQDVILPTPSVFEENFLSTLTSFIFFNKVEIVSMLQEDEKFLSEVFAQLTDEATDDDKRRELVNFFKEFCAFSQTLQPQNRDAFFKTLANLGILPALEIVMGMDDLQVRAAATDIFSYLVEFSPSMVREFVMQEAQQSDDDILLINVVIEQMICDSDPELGGAVQLMGLLRTLIDPENMLATANKTEKSEFLNFFYNHCMHVLTAPLLANTSEDKLEKDAVFGSIKTSTVCPDNYQTAQLLALILELLTFCVEHHTYHIKNYIMNKDLLRRVLILMNSKHTFLALCALRFMRRIIGLKDEFYNRYIIKGNLFDPVINALLDNGTRYNLLNSAIIELFEFIRVEDIKSLTSHIVENFYKALEPIEYVQTFKGLKTRYEQEKDRQSQKLSSVPSILRSNRFRRDARALEDDEELWFNEDDEEEGEAVVPPVEKTKPEDDFPEGYEKFLETKKAKELEDKENLPKRTSVGAFKFTFSHSVSAANGANSTNSKSVAAHTPPATSNGSSSKNTSLTTTVASTKGSLIGLVDYPDDEDEEEEEDASPRKRPRLGS</sequence>
<feature type="chain" id="PRO_0000254605" description="Serine/threonine-protein phosphatase 4 regulatory subunit 3-A">
    <location>
        <begin position="1"/>
        <end position="820"/>
    </location>
</feature>
<feature type="domain" description="WH1">
    <location>
        <begin position="1"/>
        <end position="100"/>
    </location>
</feature>
<feature type="region of interest" description="Disordered" evidence="3">
    <location>
        <begin position="682"/>
        <end position="712"/>
    </location>
</feature>
<feature type="region of interest" description="Disordered" evidence="3">
    <location>
        <begin position="750"/>
        <end position="820"/>
    </location>
</feature>
<feature type="compositionally biased region" description="Acidic residues" evidence="3">
    <location>
        <begin position="682"/>
        <end position="694"/>
    </location>
</feature>
<feature type="compositionally biased region" description="Basic and acidic residues" evidence="3">
    <location>
        <begin position="701"/>
        <end position="712"/>
    </location>
</feature>
<feature type="compositionally biased region" description="Polar residues" evidence="3">
    <location>
        <begin position="750"/>
        <end position="761"/>
    </location>
</feature>
<feature type="compositionally biased region" description="Polar residues" evidence="3">
    <location>
        <begin position="768"/>
        <end position="790"/>
    </location>
</feature>
<feature type="compositionally biased region" description="Acidic residues" evidence="3">
    <location>
        <begin position="798"/>
        <end position="809"/>
    </location>
</feature>
<organism>
    <name type="scientific">Xenopus laevis</name>
    <name type="common">African clawed frog</name>
    <dbReference type="NCBI Taxonomy" id="8355"/>
    <lineage>
        <taxon>Eukaryota</taxon>
        <taxon>Metazoa</taxon>
        <taxon>Chordata</taxon>
        <taxon>Craniata</taxon>
        <taxon>Vertebrata</taxon>
        <taxon>Euteleostomi</taxon>
        <taxon>Amphibia</taxon>
        <taxon>Batrachia</taxon>
        <taxon>Anura</taxon>
        <taxon>Pipoidea</taxon>
        <taxon>Pipidae</taxon>
        <taxon>Xenopodinae</taxon>
        <taxon>Xenopus</taxon>
        <taxon>Xenopus</taxon>
    </lineage>
</organism>